<feature type="chain" id="PRO_1000143107" description="Small ribosomal subunit protein uS15">
    <location>
        <begin position="1"/>
        <end position="89"/>
    </location>
</feature>
<proteinExistence type="inferred from homology"/>
<gene>
    <name evidence="1" type="primary">rpsO</name>
    <name type="ordered locus">Dtur_1145</name>
</gene>
<protein>
    <recommendedName>
        <fullName evidence="1">Small ribosomal subunit protein uS15</fullName>
    </recommendedName>
    <alternativeName>
        <fullName evidence="2">30S ribosomal protein S15</fullName>
    </alternativeName>
</protein>
<dbReference type="EMBL" id="CP001251">
    <property type="protein sequence ID" value="ACK42424.1"/>
    <property type="molecule type" value="Genomic_DNA"/>
</dbReference>
<dbReference type="RefSeq" id="WP_012583506.1">
    <property type="nucleotide sequence ID" value="NC_011661.1"/>
</dbReference>
<dbReference type="RefSeq" id="YP_002353038.1">
    <property type="nucleotide sequence ID" value="NC_011661.1"/>
</dbReference>
<dbReference type="SMR" id="B8E2S4"/>
<dbReference type="FunCoup" id="B8E2S4">
    <property type="interactions" value="359"/>
</dbReference>
<dbReference type="STRING" id="515635.Dtur_1145"/>
<dbReference type="EnsemblBacteria" id="ACK42424">
    <property type="protein sequence ID" value="ACK42424"/>
    <property type="gene ID" value="Dtur_1145"/>
</dbReference>
<dbReference type="KEGG" id="dtu:Dtur_1145"/>
<dbReference type="PATRIC" id="fig|515635.4.peg.1182"/>
<dbReference type="eggNOG" id="COG0184">
    <property type="taxonomic scope" value="Bacteria"/>
</dbReference>
<dbReference type="HOGENOM" id="CLU_148518_0_0_0"/>
<dbReference type="InParanoid" id="B8E2S4"/>
<dbReference type="OrthoDB" id="9799262at2"/>
<dbReference type="Proteomes" id="UP000007719">
    <property type="component" value="Chromosome"/>
</dbReference>
<dbReference type="GO" id="GO:0022627">
    <property type="term" value="C:cytosolic small ribosomal subunit"/>
    <property type="evidence" value="ECO:0000318"/>
    <property type="project" value="GO_Central"/>
</dbReference>
<dbReference type="GO" id="GO:0019843">
    <property type="term" value="F:rRNA binding"/>
    <property type="evidence" value="ECO:0007669"/>
    <property type="project" value="UniProtKB-UniRule"/>
</dbReference>
<dbReference type="GO" id="GO:0003735">
    <property type="term" value="F:structural constituent of ribosome"/>
    <property type="evidence" value="ECO:0007669"/>
    <property type="project" value="InterPro"/>
</dbReference>
<dbReference type="GO" id="GO:0006412">
    <property type="term" value="P:translation"/>
    <property type="evidence" value="ECO:0007669"/>
    <property type="project" value="UniProtKB-UniRule"/>
</dbReference>
<dbReference type="CDD" id="cd00353">
    <property type="entry name" value="Ribosomal_S15p_S13e"/>
    <property type="match status" value="1"/>
</dbReference>
<dbReference type="FunFam" id="1.10.287.10:FF:000002">
    <property type="entry name" value="30S ribosomal protein S15"/>
    <property type="match status" value="1"/>
</dbReference>
<dbReference type="Gene3D" id="6.10.250.3130">
    <property type="match status" value="1"/>
</dbReference>
<dbReference type="Gene3D" id="1.10.287.10">
    <property type="entry name" value="S15/NS1, RNA-binding"/>
    <property type="match status" value="1"/>
</dbReference>
<dbReference type="HAMAP" id="MF_01343_B">
    <property type="entry name" value="Ribosomal_uS15_B"/>
    <property type="match status" value="1"/>
</dbReference>
<dbReference type="InterPro" id="IPR000589">
    <property type="entry name" value="Ribosomal_uS15"/>
</dbReference>
<dbReference type="InterPro" id="IPR005290">
    <property type="entry name" value="Ribosomal_uS15_bac-type"/>
</dbReference>
<dbReference type="InterPro" id="IPR009068">
    <property type="entry name" value="uS15_NS1_RNA-bd_sf"/>
</dbReference>
<dbReference type="NCBIfam" id="TIGR00952">
    <property type="entry name" value="S15_bact"/>
    <property type="match status" value="1"/>
</dbReference>
<dbReference type="PANTHER" id="PTHR23321">
    <property type="entry name" value="RIBOSOMAL PROTEIN S15, BACTERIAL AND ORGANELLAR"/>
    <property type="match status" value="1"/>
</dbReference>
<dbReference type="PANTHER" id="PTHR23321:SF26">
    <property type="entry name" value="SMALL RIBOSOMAL SUBUNIT PROTEIN US15M"/>
    <property type="match status" value="1"/>
</dbReference>
<dbReference type="Pfam" id="PF00312">
    <property type="entry name" value="Ribosomal_S15"/>
    <property type="match status" value="1"/>
</dbReference>
<dbReference type="SMART" id="SM01387">
    <property type="entry name" value="Ribosomal_S15"/>
    <property type="match status" value="1"/>
</dbReference>
<dbReference type="SUPFAM" id="SSF47060">
    <property type="entry name" value="S15/NS1 RNA-binding domain"/>
    <property type="match status" value="1"/>
</dbReference>
<dbReference type="PROSITE" id="PS00362">
    <property type="entry name" value="RIBOSOMAL_S15"/>
    <property type="match status" value="1"/>
</dbReference>
<evidence type="ECO:0000255" key="1">
    <source>
        <dbReference type="HAMAP-Rule" id="MF_01343"/>
    </source>
</evidence>
<evidence type="ECO:0000305" key="2"/>
<name>RS15_DICTD</name>
<accession>B8E2S4</accession>
<keyword id="KW-1185">Reference proteome</keyword>
<keyword id="KW-0687">Ribonucleoprotein</keyword>
<keyword id="KW-0689">Ribosomal protein</keyword>
<keyword id="KW-0694">RNA-binding</keyword>
<keyword id="KW-0699">rRNA-binding</keyword>
<organism>
    <name type="scientific">Dictyoglomus turgidum (strain DSM 6724 / Z-1310)</name>
    <dbReference type="NCBI Taxonomy" id="515635"/>
    <lineage>
        <taxon>Bacteria</taxon>
        <taxon>Pseudomonadati</taxon>
        <taxon>Dictyoglomota</taxon>
        <taxon>Dictyoglomia</taxon>
        <taxon>Dictyoglomales</taxon>
        <taxon>Dictyoglomaceae</taxon>
        <taxon>Dictyoglomus</taxon>
    </lineage>
</organism>
<sequence>MALTKEEKRQIIEKFRLNENDSGSPEVQIALLTERIKKLTEHLKVHKKDYHSRVGLLKMIGRRRKLLKYLQEKDFERYKKLIQELGLRK</sequence>
<reference key="1">
    <citation type="journal article" date="2016" name="Front. Microbiol.">
        <title>The complete genome sequence of hyperthermophile Dictyoglomus turgidum DSM 6724 reveals a specialized carbohydrate fermentor.</title>
        <authorList>
            <person name="Brumm P.J."/>
            <person name="Gowda K."/>
            <person name="Robb F.T."/>
            <person name="Mead D.A."/>
        </authorList>
    </citation>
    <scope>NUCLEOTIDE SEQUENCE [LARGE SCALE GENOMIC DNA]</scope>
    <source>
        <strain>DSM 6724 / Z-1310</strain>
    </source>
</reference>
<comment type="function">
    <text evidence="1">One of the primary rRNA binding proteins, it binds directly to 16S rRNA where it helps nucleate assembly of the platform of the 30S subunit by binding and bridging several RNA helices of the 16S rRNA.</text>
</comment>
<comment type="function">
    <text evidence="1">Forms an intersubunit bridge (bridge B4) with the 23S rRNA of the 50S subunit in the ribosome.</text>
</comment>
<comment type="subunit">
    <text evidence="1">Part of the 30S ribosomal subunit. Forms a bridge to the 50S subunit in the 70S ribosome, contacting the 23S rRNA.</text>
</comment>
<comment type="similarity">
    <text evidence="1">Belongs to the universal ribosomal protein uS15 family.</text>
</comment>